<organism>
    <name type="scientific">Gallus gallus</name>
    <name type="common">Chicken</name>
    <dbReference type="NCBI Taxonomy" id="9031"/>
    <lineage>
        <taxon>Eukaryota</taxon>
        <taxon>Metazoa</taxon>
        <taxon>Chordata</taxon>
        <taxon>Craniata</taxon>
        <taxon>Vertebrata</taxon>
        <taxon>Euteleostomi</taxon>
        <taxon>Archelosauria</taxon>
        <taxon>Archosauria</taxon>
        <taxon>Dinosauria</taxon>
        <taxon>Saurischia</taxon>
        <taxon>Theropoda</taxon>
        <taxon>Coelurosauria</taxon>
        <taxon>Aves</taxon>
        <taxon>Neognathae</taxon>
        <taxon>Galloanserae</taxon>
        <taxon>Galliformes</taxon>
        <taxon>Phasianidae</taxon>
        <taxon>Phasianinae</taxon>
        <taxon>Gallus</taxon>
    </lineage>
</organism>
<accession>Q5ZKN3</accession>
<name>PHTF2_CHICK</name>
<evidence type="ECO:0000255" key="1"/>
<evidence type="ECO:0000255" key="2">
    <source>
        <dbReference type="PROSITE-ProRule" id="PRU00498"/>
    </source>
</evidence>
<evidence type="ECO:0000256" key="3">
    <source>
        <dbReference type="SAM" id="MobiDB-lite"/>
    </source>
</evidence>
<evidence type="ECO:0000305" key="4"/>
<keyword id="KW-0325">Glycoprotein</keyword>
<keyword id="KW-0472">Membrane</keyword>
<keyword id="KW-1185">Reference proteome</keyword>
<keyword id="KW-0812">Transmembrane</keyword>
<keyword id="KW-1133">Transmembrane helix</keyword>
<gene>
    <name type="primary">PHTF2</name>
    <name type="ORF">RCJMB04_9p2</name>
</gene>
<sequence>MASKVTDARDWYQKKIGAYDQQIWEKSVEQREIKGLRNKPKKTGHVKPDLIDVDLVRGSAFAKAKPESPWTSLTRKGIVRVVFFPFFYRWWLQVTSRVIFFWLLVLYLLQVAAVVLFCTAQSPHNIPLTEVIGPIWLMLLLGTVHCQIVSTRTPKPPPSTGVKRRRKLRKAAHLEVHREGDGSSTTDNTQEGTVQSYGTSTSYSIGAVFRDIWHAAFFLSGSKKAKNSIDKSTETDNGYVSLEGKKTGKSSEECAQAQERLCEVIKPEESGWSTTTMRETFGTPSHHKETHRTVTNLSDEVSSEEGPETGYSLRRNVERTSSDGTLRNRKSHHYKKHYPLEDTPKSGTSCSSRCSSSRQDSESTRPESETEDVWEDLLHCAECHSSCTSETDVESPQMNPCVKKEYRDDPFHQSHLPWIHSLNPGLEKISAIVWEGNDCKKADMSVLEISGMIMNRVNSYIPGIGYQIFGNIISLILGLMPFVFRLSQAKDLEQLAAHSATELCITAFGSNGDILVLSMVVISFVVRVSLVWIFFFLLCVAERTYKQRLLFAKLFGHLTSARRARKSEVPHFRLKKVQNIKMWLSLRSYLKRRGPQRSVDVIVSSAFLLTISVVFICCAQLLHMHEIFLDCHYNWELVIWCISLTLFLLRFVTLGSETSKKYSNTSILLTEQINLYLKMEKKPNKKEELTLVNNVLKLATKLLKELDSPFRLYGLTMNPLLYNITQVVILSAVSGVISDLLGFNLKLWKIKS</sequence>
<comment type="subcellular location">
    <subcellularLocation>
        <location evidence="1">Membrane</location>
        <topology evidence="1">Multi-pass membrane protein</topology>
    </subcellularLocation>
</comment>
<dbReference type="EMBL" id="AJ720051">
    <property type="protein sequence ID" value="CAG31710.1"/>
    <property type="molecule type" value="mRNA"/>
</dbReference>
<dbReference type="RefSeq" id="NP_001006226.1">
    <property type="nucleotide sequence ID" value="NM_001006226.1"/>
</dbReference>
<dbReference type="FunCoup" id="Q5ZKN3">
    <property type="interactions" value="1955"/>
</dbReference>
<dbReference type="STRING" id="9031.ENSGALP00000068824"/>
<dbReference type="TCDB" id="1.A.152.1.4">
    <property type="family name" value="the putative ion channel-receptor (picr) family"/>
</dbReference>
<dbReference type="GlyCosmos" id="Q5ZKN3">
    <property type="glycosylation" value="3 sites, No reported glycans"/>
</dbReference>
<dbReference type="GlyGen" id="Q5ZKN3">
    <property type="glycosylation" value="3 sites"/>
</dbReference>
<dbReference type="PaxDb" id="9031-ENSGALP00000038897"/>
<dbReference type="GeneID" id="417728"/>
<dbReference type="KEGG" id="gga:417728"/>
<dbReference type="CTD" id="57157"/>
<dbReference type="VEuPathDB" id="HostDB:geneid_417728"/>
<dbReference type="eggNOG" id="ENOG502QQGQ">
    <property type="taxonomic scope" value="Eukaryota"/>
</dbReference>
<dbReference type="InParanoid" id="Q5ZKN3"/>
<dbReference type="OrthoDB" id="10066656at2759"/>
<dbReference type="PhylomeDB" id="Q5ZKN3"/>
<dbReference type="PRO" id="PR:Q5ZKN3"/>
<dbReference type="Proteomes" id="UP000000539">
    <property type="component" value="Unassembled WGS sequence"/>
</dbReference>
<dbReference type="GO" id="GO:0005783">
    <property type="term" value="C:endoplasmic reticulum"/>
    <property type="evidence" value="ECO:0007669"/>
    <property type="project" value="InterPro"/>
</dbReference>
<dbReference type="GO" id="GO:0016020">
    <property type="term" value="C:membrane"/>
    <property type="evidence" value="ECO:0007669"/>
    <property type="project" value="UniProtKB-SubCell"/>
</dbReference>
<dbReference type="InterPro" id="IPR039775">
    <property type="entry name" value="PHTF1/2"/>
</dbReference>
<dbReference type="InterPro" id="IPR021980">
    <property type="entry name" value="PHTF1/2_N"/>
</dbReference>
<dbReference type="PANTHER" id="PTHR12680:SF2">
    <property type="entry name" value="PROTEIN PHTF2"/>
    <property type="match status" value="1"/>
</dbReference>
<dbReference type="PANTHER" id="PTHR12680">
    <property type="entry name" value="PUTATIVE HOMEODOMAIN TRANSCRIPTION FACTOR PHTF"/>
    <property type="match status" value="1"/>
</dbReference>
<dbReference type="Pfam" id="PF12129">
    <property type="entry name" value="PHTF1-2_N"/>
    <property type="match status" value="1"/>
</dbReference>
<proteinExistence type="evidence at transcript level"/>
<feature type="chain" id="PRO_0000318511" description="Protein PHTF2">
    <location>
        <begin position="1"/>
        <end position="752"/>
    </location>
</feature>
<feature type="transmembrane region" description="Helical" evidence="1">
    <location>
        <begin position="98"/>
        <end position="118"/>
    </location>
</feature>
<feature type="transmembrane region" description="Helical" evidence="1">
    <location>
        <begin position="126"/>
        <end position="146"/>
    </location>
</feature>
<feature type="transmembrane region" description="Helical" evidence="1">
    <location>
        <begin position="464"/>
        <end position="484"/>
    </location>
</feature>
<feature type="transmembrane region" description="Helical" evidence="1">
    <location>
        <begin position="520"/>
        <end position="540"/>
    </location>
</feature>
<feature type="transmembrane region" description="Helical" evidence="1">
    <location>
        <begin position="601"/>
        <end position="621"/>
    </location>
</feature>
<feature type="transmembrane region" description="Helical" evidence="1">
    <location>
        <begin position="635"/>
        <end position="655"/>
    </location>
</feature>
<feature type="transmembrane region" description="Helical" evidence="1">
    <location>
        <begin position="727"/>
        <end position="747"/>
    </location>
</feature>
<feature type="domain" description="PHTF" evidence="1">
    <location>
        <begin position="6"/>
        <end position="153"/>
    </location>
</feature>
<feature type="region of interest" description="Disordered" evidence="3">
    <location>
        <begin position="173"/>
        <end position="194"/>
    </location>
</feature>
<feature type="region of interest" description="Disordered" evidence="3">
    <location>
        <begin position="227"/>
        <end position="251"/>
    </location>
</feature>
<feature type="region of interest" description="Disordered" evidence="3">
    <location>
        <begin position="273"/>
        <end position="371"/>
    </location>
</feature>
<feature type="compositionally biased region" description="Polar residues" evidence="3">
    <location>
        <begin position="182"/>
        <end position="194"/>
    </location>
</feature>
<feature type="compositionally biased region" description="Basic residues" evidence="3">
    <location>
        <begin position="327"/>
        <end position="337"/>
    </location>
</feature>
<feature type="compositionally biased region" description="Low complexity" evidence="3">
    <location>
        <begin position="346"/>
        <end position="358"/>
    </location>
</feature>
<feature type="compositionally biased region" description="Basic and acidic residues" evidence="3">
    <location>
        <begin position="359"/>
        <end position="368"/>
    </location>
</feature>
<feature type="glycosylation site" description="N-linked (GlcNAc...) asparagine" evidence="2">
    <location>
        <position position="296"/>
    </location>
</feature>
<feature type="glycosylation site" description="N-linked (GlcNAc...) asparagine" evidence="2">
    <location>
        <position position="664"/>
    </location>
</feature>
<feature type="glycosylation site" description="N-linked (GlcNAc...) asparagine" evidence="2">
    <location>
        <position position="723"/>
    </location>
</feature>
<protein>
    <recommendedName>
        <fullName evidence="4">Protein PHTF2</fullName>
    </recommendedName>
</protein>
<reference key="1">
    <citation type="journal article" date="2005" name="Genome Biol.">
        <title>Full-length cDNAs from chicken bursal lymphocytes to facilitate gene function analysis.</title>
        <authorList>
            <person name="Caldwell R.B."/>
            <person name="Kierzek A.M."/>
            <person name="Arakawa H."/>
            <person name="Bezzubov Y."/>
            <person name="Zaim J."/>
            <person name="Fiedler P."/>
            <person name="Kutter S."/>
            <person name="Blagodatski A."/>
            <person name="Kostovska D."/>
            <person name="Koter M."/>
            <person name="Plachy J."/>
            <person name="Carninci P."/>
            <person name="Hayashizaki Y."/>
            <person name="Buerstedde J.-M."/>
        </authorList>
    </citation>
    <scope>NUCLEOTIDE SEQUENCE [LARGE SCALE MRNA]</scope>
    <source>
        <strain>CB</strain>
        <tissue>Bursa of Fabricius</tissue>
    </source>
</reference>